<name>RS14_LEVBA</name>
<organism>
    <name type="scientific">Levilactobacillus brevis (strain ATCC 367 / BCRC 12310 / CIP 105137 / JCM 1170 / LMG 11437 / NCIMB 947 / NCTC 947)</name>
    <name type="common">Lactobacillus brevis</name>
    <dbReference type="NCBI Taxonomy" id="387344"/>
    <lineage>
        <taxon>Bacteria</taxon>
        <taxon>Bacillati</taxon>
        <taxon>Bacillota</taxon>
        <taxon>Bacilli</taxon>
        <taxon>Lactobacillales</taxon>
        <taxon>Lactobacillaceae</taxon>
        <taxon>Levilactobacillus</taxon>
    </lineage>
</organism>
<proteinExistence type="inferred from homology"/>
<accession>Q03TE7</accession>
<sequence length="89" mass="10091">MAKKSKIAKAKRIEATVEKFANRRAELKAAGDYAALALLPRDASPTRIHRRDHLDGRPHAYMRKFGLSRLNFRQLAHEGKIPGVQKASW</sequence>
<dbReference type="EMBL" id="CP000416">
    <property type="protein sequence ID" value="ABJ63525.1"/>
    <property type="molecule type" value="Genomic_DNA"/>
</dbReference>
<dbReference type="RefSeq" id="WP_011667153.1">
    <property type="nucleotide sequence ID" value="NC_008497.1"/>
</dbReference>
<dbReference type="SMR" id="Q03TE7"/>
<dbReference type="STRING" id="387344.LVIS_0360"/>
<dbReference type="KEGG" id="lbr:LVIS_0360"/>
<dbReference type="eggNOG" id="COG0199">
    <property type="taxonomic scope" value="Bacteria"/>
</dbReference>
<dbReference type="HOGENOM" id="CLU_139869_0_0_9"/>
<dbReference type="Proteomes" id="UP000001652">
    <property type="component" value="Chromosome"/>
</dbReference>
<dbReference type="GO" id="GO:0005737">
    <property type="term" value="C:cytoplasm"/>
    <property type="evidence" value="ECO:0007669"/>
    <property type="project" value="UniProtKB-ARBA"/>
</dbReference>
<dbReference type="GO" id="GO:0015935">
    <property type="term" value="C:small ribosomal subunit"/>
    <property type="evidence" value="ECO:0007669"/>
    <property type="project" value="TreeGrafter"/>
</dbReference>
<dbReference type="GO" id="GO:0019843">
    <property type="term" value="F:rRNA binding"/>
    <property type="evidence" value="ECO:0007669"/>
    <property type="project" value="UniProtKB-UniRule"/>
</dbReference>
<dbReference type="GO" id="GO:0003735">
    <property type="term" value="F:structural constituent of ribosome"/>
    <property type="evidence" value="ECO:0007669"/>
    <property type="project" value="InterPro"/>
</dbReference>
<dbReference type="GO" id="GO:0006412">
    <property type="term" value="P:translation"/>
    <property type="evidence" value="ECO:0007669"/>
    <property type="project" value="UniProtKB-UniRule"/>
</dbReference>
<dbReference type="Gene3D" id="4.10.830.10">
    <property type="entry name" value="30s Ribosomal Protein S14, Chain N"/>
    <property type="match status" value="1"/>
</dbReference>
<dbReference type="HAMAP" id="MF_00537">
    <property type="entry name" value="Ribosomal_uS14_1"/>
    <property type="match status" value="1"/>
</dbReference>
<dbReference type="InterPro" id="IPR001209">
    <property type="entry name" value="Ribosomal_uS14"/>
</dbReference>
<dbReference type="InterPro" id="IPR023036">
    <property type="entry name" value="Ribosomal_uS14_bac/plastid"/>
</dbReference>
<dbReference type="InterPro" id="IPR043140">
    <property type="entry name" value="Ribosomal_uS14_sf"/>
</dbReference>
<dbReference type="NCBIfam" id="NF006477">
    <property type="entry name" value="PRK08881.1"/>
    <property type="match status" value="1"/>
</dbReference>
<dbReference type="PANTHER" id="PTHR19836">
    <property type="entry name" value="30S RIBOSOMAL PROTEIN S14"/>
    <property type="match status" value="1"/>
</dbReference>
<dbReference type="PANTHER" id="PTHR19836:SF19">
    <property type="entry name" value="SMALL RIBOSOMAL SUBUNIT PROTEIN US14M"/>
    <property type="match status" value="1"/>
</dbReference>
<dbReference type="Pfam" id="PF00253">
    <property type="entry name" value="Ribosomal_S14"/>
    <property type="match status" value="1"/>
</dbReference>
<dbReference type="SUPFAM" id="SSF57716">
    <property type="entry name" value="Glucocorticoid receptor-like (DNA-binding domain)"/>
    <property type="match status" value="1"/>
</dbReference>
<evidence type="ECO:0000255" key="1">
    <source>
        <dbReference type="HAMAP-Rule" id="MF_00537"/>
    </source>
</evidence>
<evidence type="ECO:0000305" key="2"/>
<keyword id="KW-1185">Reference proteome</keyword>
<keyword id="KW-0687">Ribonucleoprotein</keyword>
<keyword id="KW-0689">Ribosomal protein</keyword>
<keyword id="KW-0694">RNA-binding</keyword>
<keyword id="KW-0699">rRNA-binding</keyword>
<feature type="chain" id="PRO_0000354387" description="Small ribosomal subunit protein uS14A">
    <location>
        <begin position="1"/>
        <end position="89"/>
    </location>
</feature>
<comment type="function">
    <text evidence="1">Binds 16S rRNA, required for the assembly of 30S particles and may also be responsible for determining the conformation of the 16S rRNA at the A site.</text>
</comment>
<comment type="subunit">
    <text evidence="1">Part of the 30S ribosomal subunit. Contacts proteins S3 and S10.</text>
</comment>
<comment type="similarity">
    <text evidence="1">Belongs to the universal ribosomal protein uS14 family.</text>
</comment>
<gene>
    <name evidence="1" type="primary">rpsN</name>
    <name type="ordered locus">LVIS_0360</name>
</gene>
<reference key="1">
    <citation type="journal article" date="2006" name="Proc. Natl. Acad. Sci. U.S.A.">
        <title>Comparative genomics of the lactic acid bacteria.</title>
        <authorList>
            <person name="Makarova K.S."/>
            <person name="Slesarev A."/>
            <person name="Wolf Y.I."/>
            <person name="Sorokin A."/>
            <person name="Mirkin B."/>
            <person name="Koonin E.V."/>
            <person name="Pavlov A."/>
            <person name="Pavlova N."/>
            <person name="Karamychev V."/>
            <person name="Polouchine N."/>
            <person name="Shakhova V."/>
            <person name="Grigoriev I."/>
            <person name="Lou Y."/>
            <person name="Rohksar D."/>
            <person name="Lucas S."/>
            <person name="Huang K."/>
            <person name="Goodstein D.M."/>
            <person name="Hawkins T."/>
            <person name="Plengvidhya V."/>
            <person name="Welker D."/>
            <person name="Hughes J."/>
            <person name="Goh Y."/>
            <person name="Benson A."/>
            <person name="Baldwin K."/>
            <person name="Lee J.-H."/>
            <person name="Diaz-Muniz I."/>
            <person name="Dosti B."/>
            <person name="Smeianov V."/>
            <person name="Wechter W."/>
            <person name="Barabote R."/>
            <person name="Lorca G."/>
            <person name="Altermann E."/>
            <person name="Barrangou R."/>
            <person name="Ganesan B."/>
            <person name="Xie Y."/>
            <person name="Rawsthorne H."/>
            <person name="Tamir D."/>
            <person name="Parker C."/>
            <person name="Breidt F."/>
            <person name="Broadbent J.R."/>
            <person name="Hutkins R."/>
            <person name="O'Sullivan D."/>
            <person name="Steele J."/>
            <person name="Unlu G."/>
            <person name="Saier M.H. Jr."/>
            <person name="Klaenhammer T."/>
            <person name="Richardson P."/>
            <person name="Kozyavkin S."/>
            <person name="Weimer B.C."/>
            <person name="Mills D.A."/>
        </authorList>
    </citation>
    <scope>NUCLEOTIDE SEQUENCE [LARGE SCALE GENOMIC DNA]</scope>
    <source>
        <strain>ATCC 367 / BCRC 12310 / CIP 105137 / JCM 1170 / LMG 11437 / NCIMB 947 / NCTC 947</strain>
    </source>
</reference>
<protein>
    <recommendedName>
        <fullName evidence="1">Small ribosomal subunit protein uS14A</fullName>
    </recommendedName>
    <alternativeName>
        <fullName evidence="2">30S ribosomal protein S14</fullName>
    </alternativeName>
</protein>